<keyword id="KW-0012">Acyltransferase</keyword>
<keyword id="KW-0963">Cytoplasm</keyword>
<keyword id="KW-0808">Transferase</keyword>
<gene>
    <name evidence="1" type="primary">bpt</name>
    <name type="ordered locus">xcc-b100_3198</name>
</gene>
<protein>
    <recommendedName>
        <fullName evidence="1">Aspartate/glutamate leucyltransferase</fullName>
        <ecNumber evidence="1">2.3.2.29</ecNumber>
    </recommendedName>
</protein>
<dbReference type="EC" id="2.3.2.29" evidence="1"/>
<dbReference type="EMBL" id="AM920689">
    <property type="protein sequence ID" value="CAP52563.1"/>
    <property type="molecule type" value="Genomic_DNA"/>
</dbReference>
<dbReference type="SMR" id="B0RY43"/>
<dbReference type="KEGG" id="xca:xcc-b100_3198"/>
<dbReference type="HOGENOM" id="CLU_077607_0_0_6"/>
<dbReference type="Proteomes" id="UP000001188">
    <property type="component" value="Chromosome"/>
</dbReference>
<dbReference type="GO" id="GO:0005737">
    <property type="term" value="C:cytoplasm"/>
    <property type="evidence" value="ECO:0007669"/>
    <property type="project" value="UniProtKB-SubCell"/>
</dbReference>
<dbReference type="GO" id="GO:0004057">
    <property type="term" value="F:arginyl-tRNA--protein transferase activity"/>
    <property type="evidence" value="ECO:0007669"/>
    <property type="project" value="InterPro"/>
</dbReference>
<dbReference type="GO" id="GO:0008914">
    <property type="term" value="F:leucyl-tRNA--protein transferase activity"/>
    <property type="evidence" value="ECO:0007669"/>
    <property type="project" value="UniProtKB-UniRule"/>
</dbReference>
<dbReference type="GO" id="GO:0071596">
    <property type="term" value="P:ubiquitin-dependent protein catabolic process via the N-end rule pathway"/>
    <property type="evidence" value="ECO:0007669"/>
    <property type="project" value="InterPro"/>
</dbReference>
<dbReference type="HAMAP" id="MF_00689">
    <property type="entry name" value="Bpt"/>
    <property type="match status" value="1"/>
</dbReference>
<dbReference type="InterPro" id="IPR016181">
    <property type="entry name" value="Acyl_CoA_acyltransferase"/>
</dbReference>
<dbReference type="InterPro" id="IPR017138">
    <property type="entry name" value="Asp_Glu_LeuTrfase"/>
</dbReference>
<dbReference type="InterPro" id="IPR030700">
    <property type="entry name" value="N-end_Aminoacyl_Trfase"/>
</dbReference>
<dbReference type="InterPro" id="IPR007472">
    <property type="entry name" value="N-end_Aminoacyl_Trfase_C"/>
</dbReference>
<dbReference type="InterPro" id="IPR007471">
    <property type="entry name" value="N-end_Aminoacyl_Trfase_N"/>
</dbReference>
<dbReference type="NCBIfam" id="NF002341">
    <property type="entry name" value="PRK01305.1-1"/>
    <property type="match status" value="1"/>
</dbReference>
<dbReference type="NCBIfam" id="NF002342">
    <property type="entry name" value="PRK01305.1-3"/>
    <property type="match status" value="1"/>
</dbReference>
<dbReference type="NCBIfam" id="NF002346">
    <property type="entry name" value="PRK01305.2-3"/>
    <property type="match status" value="1"/>
</dbReference>
<dbReference type="PANTHER" id="PTHR21367">
    <property type="entry name" value="ARGININE-TRNA-PROTEIN TRANSFERASE 1"/>
    <property type="match status" value="1"/>
</dbReference>
<dbReference type="PANTHER" id="PTHR21367:SF1">
    <property type="entry name" value="ARGINYL-TRNA--PROTEIN TRANSFERASE 1"/>
    <property type="match status" value="1"/>
</dbReference>
<dbReference type="Pfam" id="PF04377">
    <property type="entry name" value="ATE_C"/>
    <property type="match status" value="1"/>
</dbReference>
<dbReference type="Pfam" id="PF04376">
    <property type="entry name" value="ATE_N"/>
    <property type="match status" value="1"/>
</dbReference>
<dbReference type="PIRSF" id="PIRSF037208">
    <property type="entry name" value="ATE_pro_prd"/>
    <property type="match status" value="1"/>
</dbReference>
<dbReference type="SUPFAM" id="SSF55729">
    <property type="entry name" value="Acyl-CoA N-acyltransferases (Nat)"/>
    <property type="match status" value="1"/>
</dbReference>
<evidence type="ECO:0000255" key="1">
    <source>
        <dbReference type="HAMAP-Rule" id="MF_00689"/>
    </source>
</evidence>
<feature type="chain" id="PRO_1000132000" description="Aspartate/glutamate leucyltransferase">
    <location>
        <begin position="1"/>
        <end position="252"/>
    </location>
</feature>
<organism>
    <name type="scientific">Xanthomonas campestris pv. campestris (strain B100)</name>
    <dbReference type="NCBI Taxonomy" id="509169"/>
    <lineage>
        <taxon>Bacteria</taxon>
        <taxon>Pseudomonadati</taxon>
        <taxon>Pseudomonadota</taxon>
        <taxon>Gammaproteobacteria</taxon>
        <taxon>Lysobacterales</taxon>
        <taxon>Lysobacteraceae</taxon>
        <taxon>Xanthomonas</taxon>
    </lineage>
</organism>
<proteinExistence type="inferred from homology"/>
<accession>B0RY43</accession>
<sequence>MAIHADTHDDLRLFQTGEHACGYWSDRQARDLVLDPHDPRLGALYPQALAWGFRRSGDLVYRPHCERCRACVPVRIAVDAFHPDRSQRRCLARNQDLVVRVVAAERTEEQLALYRQYLQHRHPGGGMDTHGAAEFDQFLIGGWSHGRFLEIREPAVDHVPGRLLAVAVTDVTEHALSAVYTFYAPDAAARSLGTFAILEQIQWARRERRAHLYLGYWIEGHAKMNYKRRFNALEAYDGRHWRGLPAAQGSAR</sequence>
<comment type="function">
    <text evidence="1">Functions in the N-end rule pathway of protein degradation where it conjugates Leu from its aminoacyl-tRNA to the N-termini of proteins containing an N-terminal aspartate or glutamate.</text>
</comment>
<comment type="catalytic activity">
    <reaction evidence="1">
        <text>N-terminal L-glutamyl-[protein] + L-leucyl-tRNA(Leu) = N-terminal L-leucyl-L-glutamyl-[protein] + tRNA(Leu) + H(+)</text>
        <dbReference type="Rhea" id="RHEA:50412"/>
        <dbReference type="Rhea" id="RHEA-COMP:9613"/>
        <dbReference type="Rhea" id="RHEA-COMP:9622"/>
        <dbReference type="Rhea" id="RHEA-COMP:12664"/>
        <dbReference type="Rhea" id="RHEA-COMP:12668"/>
        <dbReference type="ChEBI" id="CHEBI:15378"/>
        <dbReference type="ChEBI" id="CHEBI:64721"/>
        <dbReference type="ChEBI" id="CHEBI:78442"/>
        <dbReference type="ChEBI" id="CHEBI:78494"/>
        <dbReference type="ChEBI" id="CHEBI:133041"/>
        <dbReference type="EC" id="2.3.2.29"/>
    </reaction>
</comment>
<comment type="catalytic activity">
    <reaction evidence="1">
        <text>N-terminal L-aspartyl-[protein] + L-leucyl-tRNA(Leu) = N-terminal L-leucyl-L-aspartyl-[protein] + tRNA(Leu) + H(+)</text>
        <dbReference type="Rhea" id="RHEA:50420"/>
        <dbReference type="Rhea" id="RHEA-COMP:9613"/>
        <dbReference type="Rhea" id="RHEA-COMP:9622"/>
        <dbReference type="Rhea" id="RHEA-COMP:12669"/>
        <dbReference type="Rhea" id="RHEA-COMP:12674"/>
        <dbReference type="ChEBI" id="CHEBI:15378"/>
        <dbReference type="ChEBI" id="CHEBI:64720"/>
        <dbReference type="ChEBI" id="CHEBI:78442"/>
        <dbReference type="ChEBI" id="CHEBI:78494"/>
        <dbReference type="ChEBI" id="CHEBI:133042"/>
        <dbReference type="EC" id="2.3.2.29"/>
    </reaction>
</comment>
<comment type="subcellular location">
    <subcellularLocation>
        <location evidence="1">Cytoplasm</location>
    </subcellularLocation>
</comment>
<comment type="similarity">
    <text evidence="1">Belongs to the R-transferase family. Bpt subfamily.</text>
</comment>
<name>BPT_XANCB</name>
<reference key="1">
    <citation type="journal article" date="2008" name="J. Biotechnol.">
        <title>The genome of Xanthomonas campestris pv. campestris B100 and its use for the reconstruction of metabolic pathways involved in xanthan biosynthesis.</title>
        <authorList>
            <person name="Vorhoelter F.-J."/>
            <person name="Schneiker S."/>
            <person name="Goesmann A."/>
            <person name="Krause L."/>
            <person name="Bekel T."/>
            <person name="Kaiser O."/>
            <person name="Linke B."/>
            <person name="Patschkowski T."/>
            <person name="Rueckert C."/>
            <person name="Schmid J."/>
            <person name="Sidhu V.K."/>
            <person name="Sieber V."/>
            <person name="Tauch A."/>
            <person name="Watt S.A."/>
            <person name="Weisshaar B."/>
            <person name="Becker A."/>
            <person name="Niehaus K."/>
            <person name="Puehler A."/>
        </authorList>
    </citation>
    <scope>NUCLEOTIDE SEQUENCE [LARGE SCALE GENOMIC DNA]</scope>
    <source>
        <strain>B100</strain>
    </source>
</reference>